<protein>
    <recommendedName>
        <fullName evidence="1">Pseudouridine-5'-phosphate glycosidase</fullName>
        <shortName evidence="1">PsiMP glycosidase</shortName>
        <ecNumber evidence="1">4.2.1.70</ecNumber>
    </recommendedName>
</protein>
<accession>Q2SM69</accession>
<proteinExistence type="inferred from homology"/>
<organism>
    <name type="scientific">Hahella chejuensis (strain KCTC 2396)</name>
    <dbReference type="NCBI Taxonomy" id="349521"/>
    <lineage>
        <taxon>Bacteria</taxon>
        <taxon>Pseudomonadati</taxon>
        <taxon>Pseudomonadota</taxon>
        <taxon>Gammaproteobacteria</taxon>
        <taxon>Oceanospirillales</taxon>
        <taxon>Hahellaceae</taxon>
        <taxon>Hahella</taxon>
    </lineage>
</organism>
<evidence type="ECO:0000255" key="1">
    <source>
        <dbReference type="HAMAP-Rule" id="MF_01876"/>
    </source>
</evidence>
<keyword id="KW-0326">Glycosidase</keyword>
<keyword id="KW-0378">Hydrolase</keyword>
<keyword id="KW-0456">Lyase</keyword>
<keyword id="KW-0464">Manganese</keyword>
<keyword id="KW-0479">Metal-binding</keyword>
<keyword id="KW-1185">Reference proteome</keyword>
<sequence length="303" mass="31816">MNAYLDISPEVQTALAAGEPVVALESTIISHGMPWPQNAETALQVEQIVRDNGAVPATIAIIKGRLKVGLSKEEIEYLGKAGLNVTKASRRDIPFIIARGGDGATTVASTMILAAMAGVKVFATGGIGGVHRGAQETFDISADLQELAHTNVAVICAGAKSILDLGLTREYLETHGVPLVGYQTSTLPAFYTRDSDFDVDYQLDTPEQIAQALQAKWEMGLQGGVVIANPIPEAYAMDRGKIDAAISAALAEMDDKGVSGKDSTPFLLAKVAEITGGDSLKANIQLVFNNAALAARIAASYYA</sequence>
<dbReference type="EC" id="4.2.1.70" evidence="1"/>
<dbReference type="EMBL" id="CP000155">
    <property type="protein sequence ID" value="ABC28255.1"/>
    <property type="molecule type" value="Genomic_DNA"/>
</dbReference>
<dbReference type="RefSeq" id="WP_011395328.1">
    <property type="nucleotide sequence ID" value="NC_007645.1"/>
</dbReference>
<dbReference type="SMR" id="Q2SM69"/>
<dbReference type="STRING" id="349521.HCH_01392"/>
<dbReference type="KEGG" id="hch:HCH_01392"/>
<dbReference type="eggNOG" id="COG2313">
    <property type="taxonomic scope" value="Bacteria"/>
</dbReference>
<dbReference type="HOGENOM" id="CLU_012201_0_1_6"/>
<dbReference type="OrthoDB" id="9805870at2"/>
<dbReference type="Proteomes" id="UP000000238">
    <property type="component" value="Chromosome"/>
</dbReference>
<dbReference type="GO" id="GO:0005737">
    <property type="term" value="C:cytoplasm"/>
    <property type="evidence" value="ECO:0007669"/>
    <property type="project" value="TreeGrafter"/>
</dbReference>
<dbReference type="GO" id="GO:0016798">
    <property type="term" value="F:hydrolase activity, acting on glycosyl bonds"/>
    <property type="evidence" value="ECO:0007669"/>
    <property type="project" value="UniProtKB-KW"/>
</dbReference>
<dbReference type="GO" id="GO:0046872">
    <property type="term" value="F:metal ion binding"/>
    <property type="evidence" value="ECO:0007669"/>
    <property type="project" value="UniProtKB-KW"/>
</dbReference>
<dbReference type="GO" id="GO:0004730">
    <property type="term" value="F:pseudouridylate synthase activity"/>
    <property type="evidence" value="ECO:0007669"/>
    <property type="project" value="UniProtKB-UniRule"/>
</dbReference>
<dbReference type="GO" id="GO:0046113">
    <property type="term" value="P:nucleobase catabolic process"/>
    <property type="evidence" value="ECO:0007669"/>
    <property type="project" value="UniProtKB-UniRule"/>
</dbReference>
<dbReference type="FunFam" id="3.40.1790.10:FF:000001">
    <property type="entry name" value="Indigoidine synthase A family protein"/>
    <property type="match status" value="1"/>
</dbReference>
<dbReference type="Gene3D" id="3.40.1790.10">
    <property type="entry name" value="Indigoidine synthase domain"/>
    <property type="match status" value="1"/>
</dbReference>
<dbReference type="HAMAP" id="MF_01876">
    <property type="entry name" value="PsiMP_glycosidase"/>
    <property type="match status" value="1"/>
</dbReference>
<dbReference type="InterPro" id="IPR022830">
    <property type="entry name" value="Indigdn_synthA-like"/>
</dbReference>
<dbReference type="InterPro" id="IPR007342">
    <property type="entry name" value="PsuG"/>
</dbReference>
<dbReference type="PANTHER" id="PTHR42909:SF1">
    <property type="entry name" value="CARBOHYDRATE KINASE PFKB DOMAIN-CONTAINING PROTEIN"/>
    <property type="match status" value="1"/>
</dbReference>
<dbReference type="PANTHER" id="PTHR42909">
    <property type="entry name" value="ZGC:136858"/>
    <property type="match status" value="1"/>
</dbReference>
<dbReference type="Pfam" id="PF04227">
    <property type="entry name" value="Indigoidine_A"/>
    <property type="match status" value="1"/>
</dbReference>
<dbReference type="SUPFAM" id="SSF110581">
    <property type="entry name" value="Indigoidine synthase A-like"/>
    <property type="match status" value="1"/>
</dbReference>
<reference key="1">
    <citation type="journal article" date="2005" name="Nucleic Acids Res.">
        <title>Genomic blueprint of Hahella chejuensis, a marine microbe producing an algicidal agent.</title>
        <authorList>
            <person name="Jeong H."/>
            <person name="Yim J.H."/>
            <person name="Lee C."/>
            <person name="Choi S.-H."/>
            <person name="Park Y.K."/>
            <person name="Yoon S.H."/>
            <person name="Hur C.-G."/>
            <person name="Kang H.-Y."/>
            <person name="Kim D."/>
            <person name="Lee H.H."/>
            <person name="Park K.H."/>
            <person name="Park S.-H."/>
            <person name="Park H.-S."/>
            <person name="Lee H.K."/>
            <person name="Oh T.K."/>
            <person name="Kim J.F."/>
        </authorList>
    </citation>
    <scope>NUCLEOTIDE SEQUENCE [LARGE SCALE GENOMIC DNA]</scope>
    <source>
        <strain>KCTC 2396</strain>
    </source>
</reference>
<comment type="function">
    <text evidence="1">Catalyzes the reversible cleavage of pseudouridine 5'-phosphate (PsiMP) to ribose 5-phosphate and uracil. Functions biologically in the cleavage direction, as part of a pseudouridine degradation pathway.</text>
</comment>
<comment type="catalytic activity">
    <reaction evidence="1">
        <text>D-ribose 5-phosphate + uracil = psi-UMP + H2O</text>
        <dbReference type="Rhea" id="RHEA:18337"/>
        <dbReference type="ChEBI" id="CHEBI:15377"/>
        <dbReference type="ChEBI" id="CHEBI:17568"/>
        <dbReference type="ChEBI" id="CHEBI:58380"/>
        <dbReference type="ChEBI" id="CHEBI:78346"/>
        <dbReference type="EC" id="4.2.1.70"/>
    </reaction>
</comment>
<comment type="cofactor">
    <cofactor evidence="1">
        <name>Mn(2+)</name>
        <dbReference type="ChEBI" id="CHEBI:29035"/>
    </cofactor>
    <text evidence="1">Binds 1 Mn(2+) ion per subunit.</text>
</comment>
<comment type="subunit">
    <text evidence="1">Homotrimer.</text>
</comment>
<comment type="similarity">
    <text evidence="1">Belongs to the pseudouridine-5'-phosphate glycosidase family.</text>
</comment>
<feature type="chain" id="PRO_0000390523" description="Pseudouridine-5'-phosphate glycosidase">
    <location>
        <begin position="1"/>
        <end position="303"/>
    </location>
</feature>
<feature type="active site" description="Proton donor" evidence="1">
    <location>
        <position position="25"/>
    </location>
</feature>
<feature type="active site" description="Nucleophile" evidence="1">
    <location>
        <position position="160"/>
    </location>
</feature>
<feature type="binding site" evidence="1">
    <location>
        <position position="87"/>
    </location>
    <ligand>
        <name>substrate</name>
    </ligand>
</feature>
<feature type="binding site" evidence="1">
    <location>
        <position position="107"/>
    </location>
    <ligand>
        <name>substrate</name>
    </ligand>
</feature>
<feature type="binding site" evidence="1">
    <location>
        <position position="139"/>
    </location>
    <ligand>
        <name>Mn(2+)</name>
        <dbReference type="ChEBI" id="CHEBI:29035"/>
    </ligand>
</feature>
<feature type="binding site" evidence="1">
    <location>
        <begin position="141"/>
        <end position="143"/>
    </location>
    <ligand>
        <name>substrate</name>
    </ligand>
</feature>
<name>PSUG_HAHCH</name>
<gene>
    <name evidence="1" type="primary">psuG</name>
    <name type="ordered locus">HCH_01392</name>
</gene>